<accession>Q6UDK4</accession>
<reference key="1">
    <citation type="journal article" date="2006" name="J. Virol.">
        <title>Psittacid herpesvirus 1 and infectious laryngotracheitis virus: Comparative genome sequence analysis of two avian alphaherpesviruses.</title>
        <authorList>
            <person name="Thureen D.R."/>
            <person name="Keeler C.L. Jr."/>
        </authorList>
    </citation>
    <scope>NUCLEOTIDE SEQUENCE [LARGE SCALE GENOMIC DNA]</scope>
</reference>
<organismHost>
    <name type="scientific">Amazona oratrix</name>
    <name type="common">yellow-headed parrot</name>
    <dbReference type="NCBI Taxonomy" id="152276"/>
</organismHost>
<gene>
    <name evidence="1" type="primary">gB</name>
    <name type="synonym">UL27</name>
</gene>
<proteinExistence type="inferred from homology"/>
<sequence length="911" mass="101121">MRVCSEASPRRRQVTMLVSLLLFSAQAGFCARSAAGHSGILSLGDPAASGSALGAAEDVGDITFAEAVNSAAFDTSAIFENKLYACSTPNGASVVRLAQPRKCHKYTDSTNMTEGIAVTFKQNIAPLIFNATLYYKHITTVTTWKGFGLAQITNEYRTRVNIGFGEIKEDIDGKGECVTRAAYNRNKVVYEAYDNDVYGVYKPLVPTLLRSPSTRSFHTTNVTQRRTALGYRTSTTVDCVVEYMQARSVYPYTYFGLATGNTLEISPFYKSSDKHSRYNLYAEDRVYEALGYQARDLETRVLAPPHNRNFVFEDEFTVAWDQMDETTTACTMAKWLEIPEAVRVSYNKSFHFNFKDLTATLVASKTPFNISRLHLGGCVPRIANETIEAIYGKKYKNTHVRSGGIEYYLANGGFLIAFQRLVSNDLAELYLDEAARQNHSAVSRSKRAAPSGGGSILSGPAGDLINTHTSATFAMLQFTYDKIQKHVNMLIGNLLEAWCEMQNRQLVVWHEIKKLNPASLMTSMYGHAVAARLLGDVLAVSKCLEIPIENVVMQDSMRVPGDPSMCYVRPVLVFKYPAAADSEAMRGRVARPANNSDVGGSQQAGEAEAQQHVGVHGQLGEHNEILHGRTLIEPCKASHRRYFLFGANYLLYEDYKFIRQVNASEIEEISSTFVNLDVTLLEDLDFVPLAVYTREELRDVGTLNYDEVVRYNNLYNKMFRDLDTALKFDDGLATLRAIGEFLTNTLGGAGKVLGNVVMGAAAAIISTVSGISSFLANPFAALGIGIAVIVCVIMGLLAFRYVMTLRANPVQTLFPGIIDVGEKARQHATVRKDEDASDKELAERVLRGLEILSFESEVRKRREKAAASAKSTLAKRIGQFLRHRKTSTKDDTRKLLKTFDDEDYYYDDEHL</sequence>
<keyword id="KW-1015">Disulfide bond</keyword>
<keyword id="KW-0325">Glycoprotein</keyword>
<keyword id="KW-1032">Host cell membrane</keyword>
<keyword id="KW-1039">Host endosome</keyword>
<keyword id="KW-1040">Host Golgi apparatus</keyword>
<keyword id="KW-1043">Host membrane</keyword>
<keyword id="KW-0945">Host-virus interaction</keyword>
<keyword id="KW-0472">Membrane</keyword>
<keyword id="KW-1185">Reference proteome</keyword>
<keyword id="KW-0732">Signal</keyword>
<keyword id="KW-0812">Transmembrane</keyword>
<keyword id="KW-1133">Transmembrane helix</keyword>
<keyword id="KW-1161">Viral attachment to host cell</keyword>
<keyword id="KW-0261">Viral envelope protein</keyword>
<keyword id="KW-0946">Virion</keyword>
<keyword id="KW-1160">Virus entry into host cell</keyword>
<organism>
    <name type="scientific">Psittacid herpesvirus 1 (isolate Amazon parrot/-/97-0001/1997)</name>
    <name type="common">PsHV-1</name>
    <name type="synonym">Pacheco's disease virus</name>
    <dbReference type="NCBI Taxonomy" id="670426"/>
    <lineage>
        <taxon>Viruses</taxon>
        <taxon>Duplodnaviria</taxon>
        <taxon>Heunggongvirae</taxon>
        <taxon>Peploviricota</taxon>
        <taxon>Herviviricetes</taxon>
        <taxon>Herpesvirales</taxon>
        <taxon>Orthoherpesviridae</taxon>
        <taxon>Alphaherpesvirinae</taxon>
        <taxon>Iltovirus</taxon>
        <taxon>Iltovirus psittacidalpha1</taxon>
        <taxon>Psittacid alphaherpesvirus 1</taxon>
    </lineage>
</organism>
<protein>
    <recommendedName>
        <fullName evidence="1">Envelope glycoprotein B</fullName>
        <shortName evidence="1">gB</shortName>
    </recommendedName>
</protein>
<evidence type="ECO:0000255" key="1">
    <source>
        <dbReference type="HAMAP-Rule" id="MF_04032"/>
    </source>
</evidence>
<evidence type="ECO:0000256" key="2">
    <source>
        <dbReference type="SAM" id="MobiDB-lite"/>
    </source>
</evidence>
<feature type="signal peptide" evidence="1">
    <location>
        <begin position="1"/>
        <end position="30"/>
    </location>
</feature>
<feature type="chain" id="PRO_0000406813" description="Envelope glycoprotein B" evidence="1">
    <location>
        <begin position="31"/>
        <end position="911"/>
    </location>
</feature>
<feature type="topological domain" description="Virion surface" evidence="1">
    <location>
        <begin position="31"/>
        <end position="778"/>
    </location>
</feature>
<feature type="transmembrane region" description="Helical" evidence="1">
    <location>
        <begin position="779"/>
        <end position="799"/>
    </location>
</feature>
<feature type="topological domain" description="Intravirion" evidence="1">
    <location>
        <begin position="800"/>
        <end position="911"/>
    </location>
</feature>
<feature type="region of interest" description="Involved in fusion and/or binding to host membrane" evidence="1">
    <location>
        <begin position="143"/>
        <end position="149"/>
    </location>
</feature>
<feature type="region of interest" description="Involved in fusion and/or binding to host membrane" evidence="1">
    <location>
        <begin position="228"/>
        <end position="233"/>
    </location>
</feature>
<feature type="region of interest" description="Disordered" evidence="2">
    <location>
        <begin position="591"/>
        <end position="610"/>
    </location>
</feature>
<feature type="region of interest" description="Hydrophobic membrane proximal region" evidence="1">
    <location>
        <begin position="722"/>
        <end position="776"/>
    </location>
</feature>
<feature type="compositionally biased region" description="Low complexity" evidence="2">
    <location>
        <begin position="599"/>
        <end position="610"/>
    </location>
</feature>
<feature type="glycosylation site" description="N-linked (GlcNAc...) asparagine; by host" evidence="1">
    <location>
        <position position="111"/>
    </location>
</feature>
<feature type="glycosylation site" description="N-linked (GlcNAc...) asparagine; by host" evidence="1">
    <location>
        <position position="130"/>
    </location>
</feature>
<feature type="glycosylation site" description="N-linked (GlcNAc...) asparagine; by host" evidence="1">
    <location>
        <position position="221"/>
    </location>
</feature>
<feature type="glycosylation site" description="N-linked (GlcNAc...) asparagine; by host" evidence="1">
    <location>
        <position position="347"/>
    </location>
</feature>
<feature type="glycosylation site" description="N-linked (GlcNAc...) asparagine; by host" evidence="1">
    <location>
        <position position="369"/>
    </location>
</feature>
<feature type="glycosylation site" description="N-linked (GlcNAc...) asparagine; by host" evidence="1">
    <location>
        <position position="384"/>
    </location>
</feature>
<feature type="glycosylation site" description="N-linked (GlcNAc...) asparagine; by host" evidence="1">
    <location>
        <position position="438"/>
    </location>
</feature>
<feature type="glycosylation site" description="N-linked (GlcNAc...) asparagine; by host" evidence="1">
    <location>
        <position position="594"/>
    </location>
</feature>
<feature type="glycosylation site" description="N-linked (GlcNAc...) asparagine; by host" evidence="1">
    <location>
        <position position="662"/>
    </location>
</feature>
<feature type="disulfide bond" evidence="1">
    <location>
        <begin position="86"/>
        <end position="543"/>
    </location>
</feature>
<feature type="disulfide bond" evidence="1">
    <location>
        <begin position="103"/>
        <end position="499"/>
    </location>
</feature>
<feature type="disulfide bond" evidence="1">
    <location>
        <begin position="177"/>
        <end position="239"/>
    </location>
</feature>
<feature type="disulfide bond" evidence="1">
    <location>
        <begin position="330"/>
        <end position="378"/>
    </location>
</feature>
<feature type="disulfide bond" evidence="1">
    <location>
        <begin position="566"/>
        <end position="635"/>
    </location>
</feature>
<name>GB_PSHV1</name>
<dbReference type="EMBL" id="AY372243">
    <property type="protein sequence ID" value="AAQ73706.1"/>
    <property type="molecule type" value="Genomic_DNA"/>
</dbReference>
<dbReference type="RefSeq" id="NP_944400.1">
    <property type="nucleotide sequence ID" value="NC_005264.1"/>
</dbReference>
<dbReference type="SMR" id="Q6UDK4"/>
<dbReference type="GlyCosmos" id="Q6UDK4">
    <property type="glycosylation" value="9 sites, No reported glycans"/>
</dbReference>
<dbReference type="GeneID" id="2656973"/>
<dbReference type="KEGG" id="vg:2656973"/>
<dbReference type="Proteomes" id="UP000006840">
    <property type="component" value="Segment"/>
</dbReference>
<dbReference type="GO" id="GO:0044175">
    <property type="term" value="C:host cell endosome membrane"/>
    <property type="evidence" value="ECO:0007669"/>
    <property type="project" value="UniProtKB-SubCell"/>
</dbReference>
<dbReference type="GO" id="GO:0044178">
    <property type="term" value="C:host cell Golgi membrane"/>
    <property type="evidence" value="ECO:0007669"/>
    <property type="project" value="UniProtKB-SubCell"/>
</dbReference>
<dbReference type="GO" id="GO:0020002">
    <property type="term" value="C:host cell plasma membrane"/>
    <property type="evidence" value="ECO:0007669"/>
    <property type="project" value="UniProtKB-SubCell"/>
</dbReference>
<dbReference type="GO" id="GO:0016020">
    <property type="term" value="C:membrane"/>
    <property type="evidence" value="ECO:0007669"/>
    <property type="project" value="UniProtKB-KW"/>
</dbReference>
<dbReference type="GO" id="GO:0019031">
    <property type="term" value="C:viral envelope"/>
    <property type="evidence" value="ECO:0007669"/>
    <property type="project" value="UniProtKB-KW"/>
</dbReference>
<dbReference type="GO" id="GO:0055036">
    <property type="term" value="C:virion membrane"/>
    <property type="evidence" value="ECO:0007669"/>
    <property type="project" value="UniProtKB-SubCell"/>
</dbReference>
<dbReference type="GO" id="GO:0046718">
    <property type="term" value="P:symbiont entry into host cell"/>
    <property type="evidence" value="ECO:0007669"/>
    <property type="project" value="UniProtKB-KW"/>
</dbReference>
<dbReference type="GO" id="GO:0019062">
    <property type="term" value="P:virion attachment to host cell"/>
    <property type="evidence" value="ECO:0007669"/>
    <property type="project" value="UniProtKB-KW"/>
</dbReference>
<dbReference type="Gene3D" id="1.20.5.1890">
    <property type="match status" value="1"/>
</dbReference>
<dbReference type="Gene3D" id="2.30.29.100">
    <property type="match status" value="1"/>
</dbReference>
<dbReference type="Gene3D" id="2.30.30.1230">
    <property type="match status" value="1"/>
</dbReference>
<dbReference type="Gene3D" id="6.10.250.3280">
    <property type="match status" value="1"/>
</dbReference>
<dbReference type="HAMAP" id="MF_04032">
    <property type="entry name" value="HSV_GB"/>
    <property type="match status" value="1"/>
</dbReference>
<dbReference type="InterPro" id="IPR035377">
    <property type="entry name" value="Glycoprot_B_PH1"/>
</dbReference>
<dbReference type="InterPro" id="IPR035381">
    <property type="entry name" value="Glycoprot_B_PH2"/>
</dbReference>
<dbReference type="InterPro" id="IPR038631">
    <property type="entry name" value="Glycoprot_B_PH2_sf"/>
</dbReference>
<dbReference type="InterPro" id="IPR055341">
    <property type="entry name" value="Glycoprotein_B_ecto_C"/>
</dbReference>
<dbReference type="InterPro" id="IPR000234">
    <property type="entry name" value="Herpes_Glycoprot_B"/>
</dbReference>
<dbReference type="Pfam" id="PF17416">
    <property type="entry name" value="Glycoprot_B_PH1"/>
    <property type="match status" value="1"/>
</dbReference>
<dbReference type="Pfam" id="PF17417">
    <property type="entry name" value="Glycoprot_B_PH2"/>
    <property type="match status" value="1"/>
</dbReference>
<dbReference type="Pfam" id="PF00606">
    <property type="entry name" value="Glycoprotein_B"/>
    <property type="match status" value="1"/>
</dbReference>
<dbReference type="SUPFAM" id="SSF161008">
    <property type="entry name" value="Viral glycoprotein ectodomain-like"/>
    <property type="match status" value="1"/>
</dbReference>
<comment type="function">
    <text evidence="1">Envelope glycoprotein that forms spikes at the surface of virion envelope. Essential for the initial attachment to heparan sulfate moieties of the host cell surface proteoglycans. Involved in fusion of viral and cellular membranes leading to virus entry into the host cell. Following initial binding to its host receptors, membrane fusion is mediated by the fusion machinery composed at least of gB and the heterodimer gH/gL. May be involved in the fusion between the virion envelope and the outer nuclear membrane during virion egress.</text>
</comment>
<comment type="subunit">
    <text evidence="1">Homotrimer; disulfide-linked. Binds to heparan sulfate proteoglycans. Interacts with gH/gL heterodimer.</text>
</comment>
<comment type="subcellular location">
    <subcellularLocation>
        <location evidence="1">Virion membrane</location>
        <topology evidence="1">Single-pass type I membrane protein</topology>
    </subcellularLocation>
    <subcellularLocation>
        <location evidence="1">Host cell membrane</location>
        <topology evidence="1">Single-pass type I membrane protein</topology>
    </subcellularLocation>
    <subcellularLocation>
        <location evidence="1">Host endosome membrane</location>
        <topology evidence="1">Single-pass type I membrane protein</topology>
    </subcellularLocation>
    <subcellularLocation>
        <location evidence="1">Host Golgi apparatus membrane</location>
        <topology evidence="1">Single-pass type I membrane protein</topology>
    </subcellularLocation>
    <text evidence="1">During virion morphogenesis, this protein probably accumulates in the endosomes and trans-Golgi where secondary envelopment occurs. It is probably transported to the cell surface from where it is endocytosed and directed to the trans-Golgi network (TGN).</text>
</comment>
<comment type="similarity">
    <text evidence="1">Belongs to the herpesviridae glycoprotein B family.</text>
</comment>